<gene>
    <name evidence="1" type="primary">codY</name>
    <name type="ordered locus">TTE1446</name>
</gene>
<keyword id="KW-0963">Cytoplasm</keyword>
<keyword id="KW-0238">DNA-binding</keyword>
<keyword id="KW-1185">Reference proteome</keyword>
<keyword id="KW-0678">Repressor</keyword>
<keyword id="KW-0804">Transcription</keyword>
<keyword id="KW-0805">Transcription regulation</keyword>
<protein>
    <recommendedName>
        <fullName evidence="1">Global transcriptional regulator CodY</fullName>
    </recommendedName>
</protein>
<proteinExistence type="inferred from homology"/>
<accession>Q8R9Y4</accession>
<dbReference type="EMBL" id="AE008691">
    <property type="protein sequence ID" value="AAM24668.1"/>
    <property type="molecule type" value="Genomic_DNA"/>
</dbReference>
<dbReference type="RefSeq" id="WP_009610444.1">
    <property type="nucleotide sequence ID" value="NC_003869.1"/>
</dbReference>
<dbReference type="SMR" id="Q8R9Y4"/>
<dbReference type="STRING" id="273068.TTE1446"/>
<dbReference type="KEGG" id="tte:TTE1446"/>
<dbReference type="eggNOG" id="COG4465">
    <property type="taxonomic scope" value="Bacteria"/>
</dbReference>
<dbReference type="HOGENOM" id="CLU_089581_0_0_9"/>
<dbReference type="OrthoDB" id="2056at2"/>
<dbReference type="Proteomes" id="UP000000555">
    <property type="component" value="Chromosome"/>
</dbReference>
<dbReference type="GO" id="GO:0005737">
    <property type="term" value="C:cytoplasm"/>
    <property type="evidence" value="ECO:0007669"/>
    <property type="project" value="UniProtKB-SubCell"/>
</dbReference>
<dbReference type="GO" id="GO:0003677">
    <property type="term" value="F:DNA binding"/>
    <property type="evidence" value="ECO:0007669"/>
    <property type="project" value="UniProtKB-UniRule"/>
</dbReference>
<dbReference type="GO" id="GO:0003700">
    <property type="term" value="F:DNA-binding transcription factor activity"/>
    <property type="evidence" value="ECO:0007669"/>
    <property type="project" value="InterPro"/>
</dbReference>
<dbReference type="GO" id="GO:0005525">
    <property type="term" value="F:GTP binding"/>
    <property type="evidence" value="ECO:0007669"/>
    <property type="project" value="InterPro"/>
</dbReference>
<dbReference type="GO" id="GO:0045892">
    <property type="term" value="P:negative regulation of DNA-templated transcription"/>
    <property type="evidence" value="ECO:0007669"/>
    <property type="project" value="UniProtKB-UniRule"/>
</dbReference>
<dbReference type="FunFam" id="1.10.10.10:FF:000034">
    <property type="entry name" value="GTP-sensing transcriptional pleiotropic repressor CodY"/>
    <property type="match status" value="1"/>
</dbReference>
<dbReference type="Gene3D" id="3.30.450.40">
    <property type="match status" value="1"/>
</dbReference>
<dbReference type="Gene3D" id="1.10.10.10">
    <property type="entry name" value="Winged helix-like DNA-binding domain superfamily/Winged helix DNA-binding domain"/>
    <property type="match status" value="1"/>
</dbReference>
<dbReference type="HAMAP" id="MF_00621">
    <property type="entry name" value="HTH_type_CodY"/>
    <property type="match status" value="1"/>
</dbReference>
<dbReference type="InterPro" id="IPR014154">
    <property type="entry name" value="CodY"/>
</dbReference>
<dbReference type="InterPro" id="IPR029016">
    <property type="entry name" value="GAF-like_dom_sf"/>
</dbReference>
<dbReference type="InterPro" id="IPR013198">
    <property type="entry name" value="GTP_trans_reg_CodY_C"/>
</dbReference>
<dbReference type="InterPro" id="IPR010312">
    <property type="entry name" value="Transc_reg_CodY_N"/>
</dbReference>
<dbReference type="InterPro" id="IPR036388">
    <property type="entry name" value="WH-like_DNA-bd_sf"/>
</dbReference>
<dbReference type="InterPro" id="IPR036390">
    <property type="entry name" value="WH_DNA-bd_sf"/>
</dbReference>
<dbReference type="NCBIfam" id="TIGR02787">
    <property type="entry name" value="codY_Gpos"/>
    <property type="match status" value="1"/>
</dbReference>
<dbReference type="NCBIfam" id="NF003170">
    <property type="entry name" value="PRK04158.1"/>
    <property type="match status" value="1"/>
</dbReference>
<dbReference type="PANTHER" id="PTHR40062:SF1">
    <property type="entry name" value="GLOBAL TRANSCRIPTIONAL REGULATOR CODY"/>
    <property type="match status" value="1"/>
</dbReference>
<dbReference type="PANTHER" id="PTHR40062">
    <property type="entry name" value="GTP-SENSING TRANSCRIPTIONAL PLEIOTROPIC REPRESSOR CODY"/>
    <property type="match status" value="1"/>
</dbReference>
<dbReference type="Pfam" id="PF06018">
    <property type="entry name" value="CodY"/>
    <property type="match status" value="1"/>
</dbReference>
<dbReference type="Pfam" id="PF08222">
    <property type="entry name" value="HTH_CodY"/>
    <property type="match status" value="1"/>
</dbReference>
<dbReference type="PIRSF" id="PIRSF011572">
    <property type="entry name" value="GTP_sensing_CodY"/>
    <property type="match status" value="1"/>
</dbReference>
<dbReference type="SUPFAM" id="SSF46785">
    <property type="entry name" value="Winged helix' DNA-binding domain"/>
    <property type="match status" value="1"/>
</dbReference>
<comment type="function">
    <text evidence="1">DNA-binding global transcriptional regulator which is involved in the adaptive response to starvation and acts by directly or indirectly controlling the expression of numerous genes in response to nutrient availability. During rapid exponential growth, CodY is highly active and represses genes whose products allow adaptation to nutrient depletion.</text>
</comment>
<comment type="subcellular location">
    <subcellularLocation>
        <location evidence="1">Cytoplasm</location>
    </subcellularLocation>
</comment>
<comment type="similarity">
    <text evidence="1">Belongs to the CodY family.</text>
</comment>
<name>CODY_CALS4</name>
<sequence length="250" mass="27995">MTLLEKTRKLNRILQKTGIQPVDFMEMASILKEVIEANVYILSRKGKVLGYSALKDYGDEIFAKDKAIPEEYNDRLLRVTETLANDKGKLFKEEKALADLIVTVVPINGGGDRLGTLLLIRSTKEFTDDDLIIAEYGATVVGLEILRAKNEEIEEEARKRAVVQMALATLSYSELQAIKNIFEELKGKEGLLVASKIADKVGITRSVIVNALRKFESAGIIESRSLGMKGTHIRVLNEKLLEELEKMKRD</sequence>
<reference key="1">
    <citation type="journal article" date="2002" name="Genome Res.">
        <title>A complete sequence of the T. tengcongensis genome.</title>
        <authorList>
            <person name="Bao Q."/>
            <person name="Tian Y."/>
            <person name="Li W."/>
            <person name="Xu Z."/>
            <person name="Xuan Z."/>
            <person name="Hu S."/>
            <person name="Dong W."/>
            <person name="Yang J."/>
            <person name="Chen Y."/>
            <person name="Xue Y."/>
            <person name="Xu Y."/>
            <person name="Lai X."/>
            <person name="Huang L."/>
            <person name="Dong X."/>
            <person name="Ma Y."/>
            <person name="Ling L."/>
            <person name="Tan H."/>
            <person name="Chen R."/>
            <person name="Wang J."/>
            <person name="Yu J."/>
            <person name="Yang H."/>
        </authorList>
    </citation>
    <scope>NUCLEOTIDE SEQUENCE [LARGE SCALE GENOMIC DNA]</scope>
    <source>
        <strain>DSM 15242 / JCM 11007 / NBRC 100824 / MB4</strain>
    </source>
</reference>
<feature type="chain" id="PRO_0000213250" description="Global transcriptional regulator CodY">
    <location>
        <begin position="1"/>
        <end position="250"/>
    </location>
</feature>
<feature type="DNA-binding region" description="H-T-H motif" evidence="1">
    <location>
        <begin position="194"/>
        <end position="213"/>
    </location>
</feature>
<feature type="region of interest" description="GAF domain" evidence="1">
    <location>
        <begin position="1"/>
        <end position="146"/>
    </location>
</feature>
<evidence type="ECO:0000255" key="1">
    <source>
        <dbReference type="HAMAP-Rule" id="MF_00621"/>
    </source>
</evidence>
<organism>
    <name type="scientific">Caldanaerobacter subterraneus subsp. tengcongensis (strain DSM 15242 / JCM 11007 / NBRC 100824 / MB4)</name>
    <name type="common">Thermoanaerobacter tengcongensis</name>
    <dbReference type="NCBI Taxonomy" id="273068"/>
    <lineage>
        <taxon>Bacteria</taxon>
        <taxon>Bacillati</taxon>
        <taxon>Bacillota</taxon>
        <taxon>Clostridia</taxon>
        <taxon>Thermoanaerobacterales</taxon>
        <taxon>Thermoanaerobacteraceae</taxon>
        <taxon>Caldanaerobacter</taxon>
    </lineage>
</organism>